<evidence type="ECO:0000255" key="1">
    <source>
        <dbReference type="HAMAP-Rule" id="MF_00140"/>
    </source>
</evidence>
<dbReference type="EC" id="6.1.1.2" evidence="1"/>
<dbReference type="EMBL" id="BX294144">
    <property type="protein sequence ID" value="CAD74801.1"/>
    <property type="molecule type" value="Genomic_DNA"/>
</dbReference>
<dbReference type="RefSeq" id="NP_867255.1">
    <property type="nucleotide sequence ID" value="NC_005027.1"/>
</dbReference>
<dbReference type="RefSeq" id="WP_011120916.1">
    <property type="nucleotide sequence ID" value="NC_005027.1"/>
</dbReference>
<dbReference type="SMR" id="Q7UQA4"/>
<dbReference type="FunCoup" id="Q7UQA4">
    <property type="interactions" value="475"/>
</dbReference>
<dbReference type="STRING" id="243090.RB6436"/>
<dbReference type="EnsemblBacteria" id="CAD74801">
    <property type="protein sequence ID" value="CAD74801"/>
    <property type="gene ID" value="RB6436"/>
</dbReference>
<dbReference type="KEGG" id="rba:RB6436"/>
<dbReference type="PATRIC" id="fig|243090.15.peg.3112"/>
<dbReference type="eggNOG" id="COG0180">
    <property type="taxonomic scope" value="Bacteria"/>
</dbReference>
<dbReference type="HOGENOM" id="CLU_029244_5_0_0"/>
<dbReference type="InParanoid" id="Q7UQA4"/>
<dbReference type="OrthoDB" id="9801042at2"/>
<dbReference type="Proteomes" id="UP000001025">
    <property type="component" value="Chromosome"/>
</dbReference>
<dbReference type="GO" id="GO:0005829">
    <property type="term" value="C:cytosol"/>
    <property type="evidence" value="ECO:0000318"/>
    <property type="project" value="GO_Central"/>
</dbReference>
<dbReference type="GO" id="GO:0005524">
    <property type="term" value="F:ATP binding"/>
    <property type="evidence" value="ECO:0007669"/>
    <property type="project" value="UniProtKB-UniRule"/>
</dbReference>
<dbReference type="GO" id="GO:0004830">
    <property type="term" value="F:tryptophan-tRNA ligase activity"/>
    <property type="evidence" value="ECO:0000318"/>
    <property type="project" value="GO_Central"/>
</dbReference>
<dbReference type="GO" id="GO:0006436">
    <property type="term" value="P:tryptophanyl-tRNA aminoacylation"/>
    <property type="evidence" value="ECO:0000318"/>
    <property type="project" value="GO_Central"/>
</dbReference>
<dbReference type="CDD" id="cd00806">
    <property type="entry name" value="TrpRS_core"/>
    <property type="match status" value="1"/>
</dbReference>
<dbReference type="FunFam" id="1.10.240.10:FF:000005">
    <property type="entry name" value="Tryptophan--tRNA ligase"/>
    <property type="match status" value="1"/>
</dbReference>
<dbReference type="Gene3D" id="3.40.50.620">
    <property type="entry name" value="HUPs"/>
    <property type="match status" value="1"/>
</dbReference>
<dbReference type="Gene3D" id="1.10.240.10">
    <property type="entry name" value="Tyrosyl-Transfer RNA Synthetase"/>
    <property type="match status" value="1"/>
</dbReference>
<dbReference type="HAMAP" id="MF_00140_B">
    <property type="entry name" value="Trp_tRNA_synth_B"/>
    <property type="match status" value="1"/>
</dbReference>
<dbReference type="InterPro" id="IPR002305">
    <property type="entry name" value="aa-tRNA-synth_Ic"/>
</dbReference>
<dbReference type="InterPro" id="IPR014729">
    <property type="entry name" value="Rossmann-like_a/b/a_fold"/>
</dbReference>
<dbReference type="InterPro" id="IPR002306">
    <property type="entry name" value="Trp-tRNA-ligase"/>
</dbReference>
<dbReference type="InterPro" id="IPR024109">
    <property type="entry name" value="Trp-tRNA-ligase_bac-type"/>
</dbReference>
<dbReference type="InterPro" id="IPR050203">
    <property type="entry name" value="Trp-tRNA_synthetase"/>
</dbReference>
<dbReference type="NCBIfam" id="TIGR00233">
    <property type="entry name" value="trpS"/>
    <property type="match status" value="1"/>
</dbReference>
<dbReference type="PANTHER" id="PTHR43766">
    <property type="entry name" value="TRYPTOPHAN--TRNA LIGASE, MITOCHONDRIAL"/>
    <property type="match status" value="1"/>
</dbReference>
<dbReference type="PANTHER" id="PTHR43766:SF1">
    <property type="entry name" value="TRYPTOPHAN--TRNA LIGASE, MITOCHONDRIAL"/>
    <property type="match status" value="1"/>
</dbReference>
<dbReference type="Pfam" id="PF00579">
    <property type="entry name" value="tRNA-synt_1b"/>
    <property type="match status" value="1"/>
</dbReference>
<dbReference type="PRINTS" id="PR01039">
    <property type="entry name" value="TRNASYNTHTRP"/>
</dbReference>
<dbReference type="SUPFAM" id="SSF52374">
    <property type="entry name" value="Nucleotidylyl transferase"/>
    <property type="match status" value="1"/>
</dbReference>
<proteinExistence type="inferred from homology"/>
<gene>
    <name evidence="1" type="primary">trpS</name>
    <name type="ordered locus">RB6436</name>
</gene>
<keyword id="KW-0030">Aminoacyl-tRNA synthetase</keyword>
<keyword id="KW-0067">ATP-binding</keyword>
<keyword id="KW-0963">Cytoplasm</keyword>
<keyword id="KW-0436">Ligase</keyword>
<keyword id="KW-0547">Nucleotide-binding</keyword>
<keyword id="KW-0648">Protein biosynthesis</keyword>
<keyword id="KW-1185">Reference proteome</keyword>
<comment type="function">
    <text evidence="1">Catalyzes the attachment of tryptophan to tRNA(Trp).</text>
</comment>
<comment type="catalytic activity">
    <reaction evidence="1">
        <text>tRNA(Trp) + L-tryptophan + ATP = L-tryptophyl-tRNA(Trp) + AMP + diphosphate + H(+)</text>
        <dbReference type="Rhea" id="RHEA:24080"/>
        <dbReference type="Rhea" id="RHEA-COMP:9671"/>
        <dbReference type="Rhea" id="RHEA-COMP:9705"/>
        <dbReference type="ChEBI" id="CHEBI:15378"/>
        <dbReference type="ChEBI" id="CHEBI:30616"/>
        <dbReference type="ChEBI" id="CHEBI:33019"/>
        <dbReference type="ChEBI" id="CHEBI:57912"/>
        <dbReference type="ChEBI" id="CHEBI:78442"/>
        <dbReference type="ChEBI" id="CHEBI:78535"/>
        <dbReference type="ChEBI" id="CHEBI:456215"/>
        <dbReference type="EC" id="6.1.1.2"/>
    </reaction>
</comment>
<comment type="subunit">
    <text evidence="1">Homodimer.</text>
</comment>
<comment type="subcellular location">
    <subcellularLocation>
        <location evidence="1">Cytoplasm</location>
    </subcellularLocation>
</comment>
<comment type="similarity">
    <text evidence="1">Belongs to the class-I aminoacyl-tRNA synthetase family.</text>
</comment>
<feature type="chain" id="PRO_0000136668" description="Tryptophan--tRNA ligase">
    <location>
        <begin position="1"/>
        <end position="320"/>
    </location>
</feature>
<feature type="short sequence motif" description="'HIGH' region" evidence="1">
    <location>
        <begin position="9"/>
        <end position="17"/>
    </location>
</feature>
<feature type="short sequence motif" description="'KMSKS' region" evidence="1">
    <location>
        <begin position="189"/>
        <end position="193"/>
    </location>
</feature>
<feature type="binding site" evidence="1">
    <location>
        <begin position="8"/>
        <end position="10"/>
    </location>
    <ligand>
        <name>ATP</name>
        <dbReference type="ChEBI" id="CHEBI:30616"/>
    </ligand>
</feature>
<feature type="binding site" evidence="1">
    <location>
        <begin position="16"/>
        <end position="17"/>
    </location>
    <ligand>
        <name>ATP</name>
        <dbReference type="ChEBI" id="CHEBI:30616"/>
    </ligand>
</feature>
<feature type="binding site" evidence="1">
    <location>
        <position position="131"/>
    </location>
    <ligand>
        <name>L-tryptophan</name>
        <dbReference type="ChEBI" id="CHEBI:57912"/>
    </ligand>
</feature>
<feature type="binding site" evidence="1">
    <location>
        <begin position="143"/>
        <end position="145"/>
    </location>
    <ligand>
        <name>ATP</name>
        <dbReference type="ChEBI" id="CHEBI:30616"/>
    </ligand>
</feature>
<feature type="binding site" evidence="1">
    <location>
        <position position="182"/>
    </location>
    <ligand>
        <name>ATP</name>
        <dbReference type="ChEBI" id="CHEBI:30616"/>
    </ligand>
</feature>
<feature type="binding site" evidence="1">
    <location>
        <begin position="189"/>
        <end position="193"/>
    </location>
    <ligand>
        <name>ATP</name>
        <dbReference type="ChEBI" id="CHEBI:30616"/>
    </ligand>
</feature>
<protein>
    <recommendedName>
        <fullName evidence="1">Tryptophan--tRNA ligase</fullName>
        <ecNumber evidence="1">6.1.1.2</ecNumber>
    </recommendedName>
    <alternativeName>
        <fullName evidence="1">Tryptophanyl-tRNA synthetase</fullName>
        <shortName evidence="1">TrpRS</shortName>
    </alternativeName>
</protein>
<sequence length="320" mass="35533">MRVLSGIQPTGRPHWGNYFGAIRQYIDLQEDNEGFYFIADLHALTTVREPEVLRENVMNAALDLLALGLDPSKANLFVQSDIPEVTELTWLLMTGTPMGLLERCHAFKEKKAKGLTADAGLFTYPVLMAADILAYDSQIVPVGVDQVQHIEVCRDLAGSFHHAFGETFVLPKAKTLDVGAKVPGTDGQKMSKSYNNTLPLFGEVKKIRKQIMRIVTDSRPMEDPKDPTDDHLFQLYQLFAGPAEVETMAAKYRAGGFGYGEIKKAVAEVSEEYFAPARAKREELESDLDTVRDILAEGAKRAREVAASVVDRARRNCGLR</sequence>
<organism>
    <name type="scientific">Rhodopirellula baltica (strain DSM 10527 / NCIMB 13988 / SH1)</name>
    <dbReference type="NCBI Taxonomy" id="243090"/>
    <lineage>
        <taxon>Bacteria</taxon>
        <taxon>Pseudomonadati</taxon>
        <taxon>Planctomycetota</taxon>
        <taxon>Planctomycetia</taxon>
        <taxon>Pirellulales</taxon>
        <taxon>Pirellulaceae</taxon>
        <taxon>Rhodopirellula</taxon>
    </lineage>
</organism>
<reference key="1">
    <citation type="journal article" date="2003" name="Proc. Natl. Acad. Sci. U.S.A.">
        <title>Complete genome sequence of the marine planctomycete Pirellula sp. strain 1.</title>
        <authorList>
            <person name="Gloeckner F.O."/>
            <person name="Kube M."/>
            <person name="Bauer M."/>
            <person name="Teeling H."/>
            <person name="Lombardot T."/>
            <person name="Ludwig W."/>
            <person name="Gade D."/>
            <person name="Beck A."/>
            <person name="Borzym K."/>
            <person name="Heitmann K."/>
            <person name="Rabus R."/>
            <person name="Schlesner H."/>
            <person name="Amann R."/>
            <person name="Reinhardt R."/>
        </authorList>
    </citation>
    <scope>NUCLEOTIDE SEQUENCE [LARGE SCALE GENOMIC DNA]</scope>
    <source>
        <strain>DSM 10527 / NCIMB 13988 / SH1</strain>
    </source>
</reference>
<accession>Q7UQA4</accession>
<name>SYW_RHOBA</name>